<gene>
    <name evidence="1" type="primary">rpmA</name>
    <name type="ordered locus">Dgeo_2217</name>
</gene>
<feature type="chain" id="PRO_1000017466" description="Large ribosomal subunit protein bL27">
    <location>
        <begin position="1"/>
        <end position="91"/>
    </location>
</feature>
<feature type="region of interest" description="Disordered" evidence="2">
    <location>
        <begin position="1"/>
        <end position="20"/>
    </location>
</feature>
<keyword id="KW-0687">Ribonucleoprotein</keyword>
<keyword id="KW-0689">Ribosomal protein</keyword>
<reference key="1">
    <citation type="submission" date="2006-04" db="EMBL/GenBank/DDBJ databases">
        <title>Complete sequence of chromosome of Deinococcus geothermalis DSM 11300.</title>
        <authorList>
            <person name="Copeland A."/>
            <person name="Lucas S."/>
            <person name="Lapidus A."/>
            <person name="Barry K."/>
            <person name="Detter J.C."/>
            <person name="Glavina del Rio T."/>
            <person name="Hammon N."/>
            <person name="Israni S."/>
            <person name="Dalin E."/>
            <person name="Tice H."/>
            <person name="Pitluck S."/>
            <person name="Brettin T."/>
            <person name="Bruce D."/>
            <person name="Han C."/>
            <person name="Tapia R."/>
            <person name="Saunders E."/>
            <person name="Gilna P."/>
            <person name="Schmutz J."/>
            <person name="Larimer F."/>
            <person name="Land M."/>
            <person name="Hauser L."/>
            <person name="Kyrpides N."/>
            <person name="Kim E."/>
            <person name="Daly M.J."/>
            <person name="Fredrickson J.K."/>
            <person name="Makarova K.S."/>
            <person name="Gaidamakova E.K."/>
            <person name="Zhai M."/>
            <person name="Richardson P."/>
        </authorList>
    </citation>
    <scope>NUCLEOTIDE SEQUENCE [LARGE SCALE GENOMIC DNA]</scope>
    <source>
        <strain>DSM 11300 / CIP 105573 / AG-3a</strain>
    </source>
</reference>
<accession>Q1IW73</accession>
<dbReference type="EMBL" id="CP000359">
    <property type="protein sequence ID" value="ABF46511.1"/>
    <property type="molecule type" value="Genomic_DNA"/>
</dbReference>
<dbReference type="RefSeq" id="WP_011531332.1">
    <property type="nucleotide sequence ID" value="NC_008025.1"/>
</dbReference>
<dbReference type="SMR" id="Q1IW73"/>
<dbReference type="STRING" id="319795.Dgeo_2217"/>
<dbReference type="KEGG" id="dge:Dgeo_2217"/>
<dbReference type="eggNOG" id="COG0211">
    <property type="taxonomic scope" value="Bacteria"/>
</dbReference>
<dbReference type="HOGENOM" id="CLU_095424_4_0_0"/>
<dbReference type="Proteomes" id="UP000002431">
    <property type="component" value="Chromosome"/>
</dbReference>
<dbReference type="GO" id="GO:0022625">
    <property type="term" value="C:cytosolic large ribosomal subunit"/>
    <property type="evidence" value="ECO:0007669"/>
    <property type="project" value="TreeGrafter"/>
</dbReference>
<dbReference type="GO" id="GO:0003735">
    <property type="term" value="F:structural constituent of ribosome"/>
    <property type="evidence" value="ECO:0007669"/>
    <property type="project" value="InterPro"/>
</dbReference>
<dbReference type="GO" id="GO:0006412">
    <property type="term" value="P:translation"/>
    <property type="evidence" value="ECO:0007669"/>
    <property type="project" value="UniProtKB-UniRule"/>
</dbReference>
<dbReference type="FunFam" id="2.40.50.100:FF:000060">
    <property type="entry name" value="Apicoplast ribosomal protein L27"/>
    <property type="match status" value="1"/>
</dbReference>
<dbReference type="Gene3D" id="2.40.50.100">
    <property type="match status" value="1"/>
</dbReference>
<dbReference type="HAMAP" id="MF_00539">
    <property type="entry name" value="Ribosomal_bL27"/>
    <property type="match status" value="1"/>
</dbReference>
<dbReference type="InterPro" id="IPR001684">
    <property type="entry name" value="Ribosomal_bL27"/>
</dbReference>
<dbReference type="InterPro" id="IPR018261">
    <property type="entry name" value="Ribosomal_bL27_CS"/>
</dbReference>
<dbReference type="NCBIfam" id="TIGR00062">
    <property type="entry name" value="L27"/>
    <property type="match status" value="1"/>
</dbReference>
<dbReference type="PANTHER" id="PTHR15893:SF0">
    <property type="entry name" value="LARGE RIBOSOMAL SUBUNIT PROTEIN BL27M"/>
    <property type="match status" value="1"/>
</dbReference>
<dbReference type="PANTHER" id="PTHR15893">
    <property type="entry name" value="RIBOSOMAL PROTEIN L27"/>
    <property type="match status" value="1"/>
</dbReference>
<dbReference type="Pfam" id="PF01016">
    <property type="entry name" value="Ribosomal_L27"/>
    <property type="match status" value="1"/>
</dbReference>
<dbReference type="PRINTS" id="PR00063">
    <property type="entry name" value="RIBOSOMALL27"/>
</dbReference>
<dbReference type="SUPFAM" id="SSF110324">
    <property type="entry name" value="Ribosomal L27 protein-like"/>
    <property type="match status" value="1"/>
</dbReference>
<dbReference type="PROSITE" id="PS00831">
    <property type="entry name" value="RIBOSOMAL_L27"/>
    <property type="match status" value="1"/>
</dbReference>
<comment type="similarity">
    <text evidence="1">Belongs to the bacterial ribosomal protein bL27 family.</text>
</comment>
<protein>
    <recommendedName>
        <fullName evidence="1">Large ribosomal subunit protein bL27</fullName>
    </recommendedName>
    <alternativeName>
        <fullName evidence="3">50S ribosomal protein L27</fullName>
    </alternativeName>
</protein>
<organism>
    <name type="scientific">Deinococcus geothermalis (strain DSM 11300 / CIP 105573 / AG-3a)</name>
    <dbReference type="NCBI Taxonomy" id="319795"/>
    <lineage>
        <taxon>Bacteria</taxon>
        <taxon>Thermotogati</taxon>
        <taxon>Deinococcota</taxon>
        <taxon>Deinococci</taxon>
        <taxon>Deinococcales</taxon>
        <taxon>Deinococcaceae</taxon>
        <taxon>Deinococcus</taxon>
    </lineage>
</organism>
<name>RL27_DEIGD</name>
<proteinExistence type="inferred from homology"/>
<sequence>MAHKKGVGSSKNGRDSNPKYLGVKKFGGEAVVAGNILVRQRGTKFKPGANVGMGRDHTLFALVDGKVVFTNRGAKGRFISVEAAAPQVAAD</sequence>
<evidence type="ECO:0000255" key="1">
    <source>
        <dbReference type="HAMAP-Rule" id="MF_00539"/>
    </source>
</evidence>
<evidence type="ECO:0000256" key="2">
    <source>
        <dbReference type="SAM" id="MobiDB-lite"/>
    </source>
</evidence>
<evidence type="ECO:0000305" key="3"/>